<sequence>MRFTLYPAIDLKDGQCVRLRRGEMEDATIYGNDPAVRARQWQDAGFAWLHVVDLNGAFAGRSENAEAITAILGAVSVPVQLGGGIRDMAAVERWIEAGISRVILGSAAVKTPQLVKDACRAFPGRIAVGIDARDGFVATEGWAETSSVAAVELAARFEDEGVAAIIYTDIGRDGMLTGPNVEQTLALARATTIPVIASGGVGDLSHIVDVYDAGTITGVILGRALYDGRVDPAAALQAVSLR</sequence>
<evidence type="ECO:0000255" key="1">
    <source>
        <dbReference type="HAMAP-Rule" id="MF_01014"/>
    </source>
</evidence>
<proteinExistence type="inferred from homology"/>
<comment type="catalytic activity">
    <reaction evidence="1">
        <text>1-(5-phospho-beta-D-ribosyl)-5-[(5-phospho-beta-D-ribosylamino)methylideneamino]imidazole-4-carboxamide = 5-[(5-phospho-1-deoxy-D-ribulos-1-ylimino)methylamino]-1-(5-phospho-beta-D-ribosyl)imidazole-4-carboxamide</text>
        <dbReference type="Rhea" id="RHEA:15469"/>
        <dbReference type="ChEBI" id="CHEBI:58435"/>
        <dbReference type="ChEBI" id="CHEBI:58525"/>
        <dbReference type="EC" id="5.3.1.16"/>
    </reaction>
</comment>
<comment type="pathway">
    <text evidence="1">Amino-acid biosynthesis; L-histidine biosynthesis; L-histidine from 5-phospho-alpha-D-ribose 1-diphosphate: step 4/9.</text>
</comment>
<comment type="subcellular location">
    <subcellularLocation>
        <location evidence="1">Cytoplasm</location>
    </subcellularLocation>
</comment>
<comment type="similarity">
    <text evidence="1">Belongs to the HisA/HisF family.</text>
</comment>
<gene>
    <name evidence="1" type="primary">hisA</name>
    <name type="ordered locus">GbCGDNIH1_2231</name>
</gene>
<accession>Q0BPX3</accession>
<protein>
    <recommendedName>
        <fullName evidence="1">1-(5-phosphoribosyl)-5-[(5-phosphoribosylamino)methylideneamino] imidazole-4-carboxamide isomerase</fullName>
        <ecNumber evidence="1">5.3.1.16</ecNumber>
    </recommendedName>
    <alternativeName>
        <fullName evidence="1">Phosphoribosylformimino-5-aminoimidazole carboxamide ribotide isomerase</fullName>
    </alternativeName>
</protein>
<reference key="1">
    <citation type="journal article" date="2007" name="J. Bacteriol.">
        <title>Genome sequence analysis of the emerging human pathogenic acetic acid bacterium Granulibacter bethesdensis.</title>
        <authorList>
            <person name="Greenberg D.E."/>
            <person name="Porcella S.F."/>
            <person name="Zelazny A.M."/>
            <person name="Virtaneva K."/>
            <person name="Sturdevant D.E."/>
            <person name="Kupko J.J. III"/>
            <person name="Barbian K.D."/>
            <person name="Babar A."/>
            <person name="Dorward D.W."/>
            <person name="Holland S.M."/>
        </authorList>
    </citation>
    <scope>NUCLEOTIDE SEQUENCE [LARGE SCALE GENOMIC DNA]</scope>
    <source>
        <strain>ATCC BAA-1260 / CGDNIH1</strain>
    </source>
</reference>
<feature type="chain" id="PRO_0000290478" description="1-(5-phosphoribosyl)-5-[(5-phosphoribosylamino)methylideneamino] imidazole-4-carboxamide isomerase">
    <location>
        <begin position="1"/>
        <end position="242"/>
    </location>
</feature>
<feature type="active site" description="Proton acceptor" evidence="1">
    <location>
        <position position="10"/>
    </location>
</feature>
<feature type="active site" description="Proton donor" evidence="1">
    <location>
        <position position="131"/>
    </location>
</feature>
<keyword id="KW-0028">Amino-acid biosynthesis</keyword>
<keyword id="KW-0963">Cytoplasm</keyword>
<keyword id="KW-0368">Histidine biosynthesis</keyword>
<keyword id="KW-0413">Isomerase</keyword>
<keyword id="KW-1185">Reference proteome</keyword>
<name>HIS4_GRABC</name>
<organism>
    <name type="scientific">Granulibacter bethesdensis (strain ATCC BAA-1260 / CGDNIH1)</name>
    <dbReference type="NCBI Taxonomy" id="391165"/>
    <lineage>
        <taxon>Bacteria</taxon>
        <taxon>Pseudomonadati</taxon>
        <taxon>Pseudomonadota</taxon>
        <taxon>Alphaproteobacteria</taxon>
        <taxon>Acetobacterales</taxon>
        <taxon>Acetobacteraceae</taxon>
        <taxon>Granulibacter</taxon>
    </lineage>
</organism>
<dbReference type="EC" id="5.3.1.16" evidence="1"/>
<dbReference type="EMBL" id="CP000394">
    <property type="protein sequence ID" value="ABI63129.1"/>
    <property type="molecule type" value="Genomic_DNA"/>
</dbReference>
<dbReference type="RefSeq" id="WP_011632931.1">
    <property type="nucleotide sequence ID" value="NC_008343.2"/>
</dbReference>
<dbReference type="SMR" id="Q0BPX3"/>
<dbReference type="STRING" id="391165.GbCGDNIH1_2231"/>
<dbReference type="KEGG" id="gbe:GbCGDNIH1_2231"/>
<dbReference type="eggNOG" id="COG0106">
    <property type="taxonomic scope" value="Bacteria"/>
</dbReference>
<dbReference type="HOGENOM" id="CLU_048577_1_1_5"/>
<dbReference type="OrthoDB" id="9807749at2"/>
<dbReference type="UniPathway" id="UPA00031">
    <property type="reaction ID" value="UER00009"/>
</dbReference>
<dbReference type="Proteomes" id="UP000001963">
    <property type="component" value="Chromosome"/>
</dbReference>
<dbReference type="GO" id="GO:0005737">
    <property type="term" value="C:cytoplasm"/>
    <property type="evidence" value="ECO:0007669"/>
    <property type="project" value="UniProtKB-SubCell"/>
</dbReference>
<dbReference type="GO" id="GO:0003949">
    <property type="term" value="F:1-(5-phosphoribosyl)-5-[(5-phosphoribosylamino)methylideneamino]imidazole-4-carboxamide isomerase activity"/>
    <property type="evidence" value="ECO:0007669"/>
    <property type="project" value="UniProtKB-UniRule"/>
</dbReference>
<dbReference type="GO" id="GO:0000105">
    <property type="term" value="P:L-histidine biosynthetic process"/>
    <property type="evidence" value="ECO:0007669"/>
    <property type="project" value="UniProtKB-UniRule"/>
</dbReference>
<dbReference type="GO" id="GO:0000162">
    <property type="term" value="P:L-tryptophan biosynthetic process"/>
    <property type="evidence" value="ECO:0007669"/>
    <property type="project" value="TreeGrafter"/>
</dbReference>
<dbReference type="CDD" id="cd04732">
    <property type="entry name" value="HisA"/>
    <property type="match status" value="1"/>
</dbReference>
<dbReference type="FunFam" id="3.20.20.70:FF:000009">
    <property type="entry name" value="1-(5-phosphoribosyl)-5-[(5-phosphoribosylamino)methylideneamino] imidazole-4-carboxamide isomerase"/>
    <property type="match status" value="1"/>
</dbReference>
<dbReference type="Gene3D" id="3.20.20.70">
    <property type="entry name" value="Aldolase class I"/>
    <property type="match status" value="1"/>
</dbReference>
<dbReference type="HAMAP" id="MF_01014">
    <property type="entry name" value="HisA"/>
    <property type="match status" value="1"/>
</dbReference>
<dbReference type="InterPro" id="IPR013785">
    <property type="entry name" value="Aldolase_TIM"/>
</dbReference>
<dbReference type="InterPro" id="IPR006062">
    <property type="entry name" value="His_biosynth"/>
</dbReference>
<dbReference type="InterPro" id="IPR006063">
    <property type="entry name" value="HisA_bact_arch"/>
</dbReference>
<dbReference type="InterPro" id="IPR044524">
    <property type="entry name" value="Isoase_HisA-like"/>
</dbReference>
<dbReference type="InterPro" id="IPR023016">
    <property type="entry name" value="Isoase_HisA-like_bact"/>
</dbReference>
<dbReference type="InterPro" id="IPR011060">
    <property type="entry name" value="RibuloseP-bd_barrel"/>
</dbReference>
<dbReference type="NCBIfam" id="TIGR00007">
    <property type="entry name" value="1-(5-phosphoribosyl)-5-[(5-phosphoribosylamino)methylideneamino]imidazole-4-carboxamide isomerase"/>
    <property type="match status" value="1"/>
</dbReference>
<dbReference type="PANTHER" id="PTHR43090">
    <property type="entry name" value="1-(5-PHOSPHORIBOSYL)-5-[(5-PHOSPHORIBOSYLAMINO)METHYLIDENEAMINO] IMIDAZOLE-4-CARBOXAMIDE ISOMERASE"/>
    <property type="match status" value="1"/>
</dbReference>
<dbReference type="PANTHER" id="PTHR43090:SF2">
    <property type="entry name" value="1-(5-PHOSPHORIBOSYL)-5-[(5-PHOSPHORIBOSYLAMINO)METHYLIDENEAMINO] IMIDAZOLE-4-CARBOXAMIDE ISOMERASE"/>
    <property type="match status" value="1"/>
</dbReference>
<dbReference type="Pfam" id="PF00977">
    <property type="entry name" value="His_biosynth"/>
    <property type="match status" value="1"/>
</dbReference>
<dbReference type="SUPFAM" id="SSF51366">
    <property type="entry name" value="Ribulose-phoshate binding barrel"/>
    <property type="match status" value="1"/>
</dbReference>